<dbReference type="EMBL" id="AF396666">
    <property type="protein sequence ID" value="AAL76115.1"/>
    <property type="molecule type" value="mRNA"/>
</dbReference>
<dbReference type="EMBL" id="AJ720049">
    <property type="protein sequence ID" value="CAG31708.1"/>
    <property type="molecule type" value="mRNA"/>
</dbReference>
<dbReference type="EMBL" id="AJ851790">
    <property type="protein sequence ID" value="CAH65424.1"/>
    <property type="status" value="ALT_FRAME"/>
    <property type="molecule type" value="mRNA"/>
</dbReference>
<dbReference type="RefSeq" id="NP_989719.2">
    <property type="nucleotide sequence ID" value="NM_204388.2"/>
</dbReference>
<dbReference type="RefSeq" id="XP_015141355.1">
    <property type="nucleotide sequence ID" value="XM_015285869.1"/>
</dbReference>
<dbReference type="RefSeq" id="XP_046771375.1">
    <property type="nucleotide sequence ID" value="XM_046915419.1"/>
</dbReference>
<dbReference type="RefSeq" id="XP_046771376.1">
    <property type="nucleotide sequence ID" value="XM_046915420.1"/>
</dbReference>
<dbReference type="FunCoup" id="Q5ZKN5">
    <property type="interactions" value="9"/>
</dbReference>
<dbReference type="STRING" id="9031.ENSGALP00000064240"/>
<dbReference type="PaxDb" id="9031-ENSGALP00000036368"/>
<dbReference type="GeneID" id="378905"/>
<dbReference type="KEGG" id="gga:378905"/>
<dbReference type="CTD" id="152877"/>
<dbReference type="VEuPathDB" id="HostDB:geneid_378905"/>
<dbReference type="eggNOG" id="ENOG502RUYA">
    <property type="taxonomic scope" value="Eukaryota"/>
</dbReference>
<dbReference type="HOGENOM" id="CLU_054215_0_0_1"/>
<dbReference type="InParanoid" id="Q5ZKN5"/>
<dbReference type="OrthoDB" id="10026856at2759"/>
<dbReference type="PhylomeDB" id="Q5ZKN5"/>
<dbReference type="TreeFam" id="TF332095"/>
<dbReference type="PRO" id="PR:Q5ZKN5"/>
<dbReference type="Proteomes" id="UP000000539">
    <property type="component" value="Chromosome 4"/>
</dbReference>
<dbReference type="Bgee" id="ENSGALG00000015713">
    <property type="expression patterns" value="Expressed in skeletal muscle tissue and 13 other cell types or tissues"/>
</dbReference>
<dbReference type="GO" id="GO:0005634">
    <property type="term" value="C:nucleus"/>
    <property type="evidence" value="ECO:0000314"/>
    <property type="project" value="MGI"/>
</dbReference>
<dbReference type="GO" id="GO:0006606">
    <property type="term" value="P:protein import into nucleus"/>
    <property type="evidence" value="ECO:0000314"/>
    <property type="project" value="MGI"/>
</dbReference>
<dbReference type="InterPro" id="IPR029356">
    <property type="entry name" value="FAM53"/>
</dbReference>
<dbReference type="PANTHER" id="PTHR28567:SF2">
    <property type="entry name" value="PROTEIN FAM53A"/>
    <property type="match status" value="1"/>
</dbReference>
<dbReference type="PANTHER" id="PTHR28567">
    <property type="entry name" value="PROTEIN FAM53A-LIKE ISOFORM X1"/>
    <property type="match status" value="1"/>
</dbReference>
<dbReference type="Pfam" id="PF15242">
    <property type="entry name" value="FAM53"/>
    <property type="match status" value="1"/>
</dbReference>
<protein>
    <recommendedName>
        <fullName evidence="1">Protein FAM53A</fullName>
    </recommendedName>
    <alternativeName>
        <fullName evidence="5">Dorsal neural-tube nuclear protein</fullName>
    </alternativeName>
</protein>
<evidence type="ECO:0000250" key="1">
    <source>
        <dbReference type="UniProtKB" id="Q6NSI3"/>
    </source>
</evidence>
<evidence type="ECO:0000255" key="2"/>
<evidence type="ECO:0000256" key="3">
    <source>
        <dbReference type="SAM" id="MobiDB-lite"/>
    </source>
</evidence>
<evidence type="ECO:0000269" key="4">
    <source>
    </source>
</evidence>
<evidence type="ECO:0000303" key="5">
    <source>
    </source>
</evidence>
<evidence type="ECO:0000305" key="6"/>
<keyword id="KW-0539">Nucleus</keyword>
<keyword id="KW-1185">Reference proteome</keyword>
<gene>
    <name evidence="1" type="primary">FAM53A</name>
    <name evidence="5" type="synonym">DNTNP</name>
    <name type="ORF">RCJMB04_33c19</name>
    <name type="ORF">RCJMB04_9o15</name>
</gene>
<reference key="1">
    <citation type="journal article" date="2002" name="Dev. Dyn.">
        <title>Isolation of DNTNP, which encodes a potential nuclear protein that is expressed in the developing, dorsal neural tube.</title>
        <authorList>
            <person name="Jun L."/>
            <person name="Balboni A.L."/>
            <person name="Laitman J.T."/>
            <person name="Bergemann A.D."/>
        </authorList>
    </citation>
    <scope>NUCLEOTIDE SEQUENCE [MRNA]</scope>
    <scope>FUNCTION</scope>
    <scope>SUBCELLULAR LOCATION</scope>
    <scope>DEVELOPMENTAL STAGE</scope>
</reference>
<reference key="2">
    <citation type="journal article" date="2005" name="Genome Biol.">
        <title>Full-length cDNAs from chicken bursal lymphocytes to facilitate gene function analysis.</title>
        <authorList>
            <person name="Caldwell R.B."/>
            <person name="Kierzek A.M."/>
            <person name="Arakawa H."/>
            <person name="Bezzubov Y."/>
            <person name="Zaim J."/>
            <person name="Fiedler P."/>
            <person name="Kutter S."/>
            <person name="Blagodatski A."/>
            <person name="Kostovska D."/>
            <person name="Koter M."/>
            <person name="Plachy J."/>
            <person name="Carninci P."/>
            <person name="Hayashizaki Y."/>
            <person name="Buerstedde J.-M."/>
        </authorList>
    </citation>
    <scope>NUCLEOTIDE SEQUENCE [LARGE SCALE MRNA]</scope>
    <source>
        <strain>CB</strain>
        <tissue>Bursa of Fabricius</tissue>
    </source>
</reference>
<comment type="function">
    <text evidence="4">May play an important role in neural development; the dorsomedial roof of the third ventricle.</text>
</comment>
<comment type="subcellular location">
    <subcellularLocation>
        <location evidence="4">Nucleus</location>
    </subcellularLocation>
    <text evidence="4">Subnuclear distribution.</text>
</comment>
<comment type="developmental stage">
    <text evidence="4">At stage 18, expressed throughout the dorsal central nervous system (CNS), both within the brain and the spinal neural. Strongest expression is observed within the tectum and the cerebellar primordium. Expressed also in the somites, the heart, the branchial arches, and the limb buds.</text>
</comment>
<comment type="similarity">
    <text evidence="6">Belongs to the FAM53 family.</text>
</comment>
<comment type="sequence caution" evidence="6">
    <conflict type="frameshift">
        <sequence resource="EMBL-CDS" id="CAH65424"/>
    </conflict>
</comment>
<proteinExistence type="evidence at transcript level"/>
<sequence>MVTLITEKLQNQSLDDLTCKTYNINLYSSEKLNKSGSLFSFEINEDSPWKALNGGCPIQTDARNSAYPFPVCPFSTGPASNGALQWQQEPSSTSMVSGWISELNLNENSGQPLAPPTKRHCRSLSEPDELARCRSPWKPGNSKVWTPVSKRRCNSGGSATLQRCNSHGSATLQRSTSISLPQNILSLNNVFTVTSFNTSPVPRPSSASSGFVDSSEGSTSSSTRWNSGGPCDFNPRRRLSLSQEHITETGNLLPSANSTPTSTPELSRRQGLLRCRSQPCVLNEKKSRLKRRREEDVRWNRPSLDFFKMTRTLKNSKSLCSLDYEDDDDDTQMKTIVSSPCDSNDLMNIITPGSSPMKEQLDEVRHHGSCQGSFKTRDYKKAAAVCESDEDTSDCESTEEGIFPLDCGDLDLEQIENN</sequence>
<organism>
    <name type="scientific">Gallus gallus</name>
    <name type="common">Chicken</name>
    <dbReference type="NCBI Taxonomy" id="9031"/>
    <lineage>
        <taxon>Eukaryota</taxon>
        <taxon>Metazoa</taxon>
        <taxon>Chordata</taxon>
        <taxon>Craniata</taxon>
        <taxon>Vertebrata</taxon>
        <taxon>Euteleostomi</taxon>
        <taxon>Archelosauria</taxon>
        <taxon>Archosauria</taxon>
        <taxon>Dinosauria</taxon>
        <taxon>Saurischia</taxon>
        <taxon>Theropoda</taxon>
        <taxon>Coelurosauria</taxon>
        <taxon>Aves</taxon>
        <taxon>Neognathae</taxon>
        <taxon>Galloanserae</taxon>
        <taxon>Galliformes</taxon>
        <taxon>Phasianidae</taxon>
        <taxon>Phasianinae</taxon>
        <taxon>Gallus</taxon>
    </lineage>
</organism>
<name>FA53A_CHICK</name>
<accession>Q5ZKN5</accession>
<accession>Q5F360</accession>
<accession>Q8QHJ7</accession>
<feature type="chain" id="PRO_0000261629" description="Protein FAM53A">
    <location>
        <begin position="1"/>
        <end position="418"/>
    </location>
</feature>
<feature type="region of interest" description="Disordered" evidence="3">
    <location>
        <begin position="198"/>
        <end position="236"/>
    </location>
</feature>
<feature type="region of interest" description="Disordered" evidence="3">
    <location>
        <begin position="248"/>
        <end position="269"/>
    </location>
</feature>
<feature type="short sequence motif" description="Nuclear localization signal" evidence="2">
    <location>
        <begin position="285"/>
        <end position="293"/>
    </location>
</feature>
<feature type="compositionally biased region" description="Low complexity" evidence="3">
    <location>
        <begin position="205"/>
        <end position="229"/>
    </location>
</feature>
<feature type="compositionally biased region" description="Polar residues" evidence="3">
    <location>
        <begin position="248"/>
        <end position="265"/>
    </location>
</feature>
<feature type="sequence conflict" description="In Ref. 2; CAH65424." evidence="6" ref="2">
    <location>
        <position position="45"/>
    </location>
</feature>
<feature type="sequence conflict" description="In Ref. 1; AAL76115." evidence="6" ref="1">
    <original>E</original>
    <variation>D</variation>
    <location>
        <position position="216"/>
    </location>
</feature>
<feature type="sequence conflict" description="In Ref. 2; CAG31708." evidence="6" ref="2">
    <original>E</original>
    <variation>D</variation>
    <location>
        <position position="400"/>
    </location>
</feature>